<gene>
    <name type="primary">cbbA</name>
    <name type="ordered locus">RB0192</name>
    <name type="ORF">SMb20199</name>
</gene>
<name>ALF_RHIME</name>
<protein>
    <recommendedName>
        <fullName>Fructose-bisphosphate aldolase</fullName>
        <shortName>FBP aldolase</shortName>
        <shortName>FBPA</shortName>
        <ecNumber>4.1.2.13</ecNumber>
    </recommendedName>
    <alternativeName>
        <fullName>Fructose-1,6-bisphosphate aldolase</fullName>
    </alternativeName>
</protein>
<accession>P58336</accession>
<proteinExistence type="inferred from homology"/>
<reference key="1">
    <citation type="journal article" date="2001" name="Proc. Natl. Acad. Sci. U.S.A.">
        <title>The complete sequence of the 1,683-kb pSymB megaplasmid from the N2-fixing endosymbiont Sinorhizobium meliloti.</title>
        <authorList>
            <person name="Finan T.M."/>
            <person name="Weidner S."/>
            <person name="Wong K."/>
            <person name="Buhrmester J."/>
            <person name="Chain P."/>
            <person name="Vorhoelter F.J."/>
            <person name="Hernandez-Lucas I."/>
            <person name="Becker A."/>
            <person name="Cowie A."/>
            <person name="Gouzy J."/>
            <person name="Golding B."/>
            <person name="Puehler A."/>
        </authorList>
    </citation>
    <scope>NUCLEOTIDE SEQUENCE [LARGE SCALE GENOMIC DNA]</scope>
    <source>
        <strain>1021</strain>
    </source>
</reference>
<reference key="2">
    <citation type="journal article" date="2001" name="Science">
        <title>The composite genome of the legume symbiont Sinorhizobium meliloti.</title>
        <authorList>
            <person name="Galibert F."/>
            <person name="Finan T.M."/>
            <person name="Long S.R."/>
            <person name="Puehler A."/>
            <person name="Abola P."/>
            <person name="Ampe F."/>
            <person name="Barloy-Hubler F."/>
            <person name="Barnett M.J."/>
            <person name="Becker A."/>
            <person name="Boistard P."/>
            <person name="Bothe G."/>
            <person name="Boutry M."/>
            <person name="Bowser L."/>
            <person name="Buhrmester J."/>
            <person name="Cadieu E."/>
            <person name="Capela D."/>
            <person name="Chain P."/>
            <person name="Cowie A."/>
            <person name="Davis R.W."/>
            <person name="Dreano S."/>
            <person name="Federspiel N.A."/>
            <person name="Fisher R.F."/>
            <person name="Gloux S."/>
            <person name="Godrie T."/>
            <person name="Goffeau A."/>
            <person name="Golding B."/>
            <person name="Gouzy J."/>
            <person name="Gurjal M."/>
            <person name="Hernandez-Lucas I."/>
            <person name="Hong A."/>
            <person name="Huizar L."/>
            <person name="Hyman R.W."/>
            <person name="Jones T."/>
            <person name="Kahn D."/>
            <person name="Kahn M.L."/>
            <person name="Kalman S."/>
            <person name="Keating D.H."/>
            <person name="Kiss E."/>
            <person name="Komp C."/>
            <person name="Lelaure V."/>
            <person name="Masuy D."/>
            <person name="Palm C."/>
            <person name="Peck M.C."/>
            <person name="Pohl T.M."/>
            <person name="Portetelle D."/>
            <person name="Purnelle B."/>
            <person name="Ramsperger U."/>
            <person name="Surzycki R."/>
            <person name="Thebault P."/>
            <person name="Vandenbol M."/>
            <person name="Vorhoelter F.J."/>
            <person name="Weidner S."/>
            <person name="Wells D.H."/>
            <person name="Wong K."/>
            <person name="Yeh K.-C."/>
            <person name="Batut J."/>
        </authorList>
    </citation>
    <scope>NUCLEOTIDE SEQUENCE [LARGE SCALE GENOMIC DNA]</scope>
    <source>
        <strain>1021</strain>
    </source>
</reference>
<comment type="function">
    <text evidence="1">Catalyzes the aldol condensation of dihydroxyacetone phosphate (DHAP or glycerone-phosphate) with glyceraldehyde 3-phosphate (G3P) to form fructose 1,6-bisphosphate (FBP) in gluconeogenesis and the reverse reaction in glycolysis.</text>
</comment>
<comment type="catalytic activity">
    <reaction>
        <text>beta-D-fructose 1,6-bisphosphate = D-glyceraldehyde 3-phosphate + dihydroxyacetone phosphate</text>
        <dbReference type="Rhea" id="RHEA:14729"/>
        <dbReference type="ChEBI" id="CHEBI:32966"/>
        <dbReference type="ChEBI" id="CHEBI:57642"/>
        <dbReference type="ChEBI" id="CHEBI:59776"/>
        <dbReference type="EC" id="4.1.2.13"/>
    </reaction>
</comment>
<comment type="cofactor">
    <cofactor evidence="1">
        <name>Zn(2+)</name>
        <dbReference type="ChEBI" id="CHEBI:29105"/>
    </cofactor>
    <text evidence="1">Binds 2 Zn(2+) ions per subunit. One is catalytic and the other provides a structural contribution.</text>
</comment>
<comment type="pathway">
    <text>Carbohydrate biosynthesis; Calvin cycle.</text>
</comment>
<comment type="pathway">
    <text>Carbohydrate degradation; glycolysis; D-glyceraldehyde 3-phosphate and glycerone phosphate from D-glucose: step 4/4.</text>
</comment>
<comment type="subunit">
    <text evidence="1">Homodimer.</text>
</comment>
<comment type="similarity">
    <text evidence="2">Belongs to the class II fructose-bisphosphate aldolase family.</text>
</comment>
<dbReference type="EC" id="4.1.2.13"/>
<dbReference type="EMBL" id="AL591985">
    <property type="protein sequence ID" value="CAC48592.1"/>
    <property type="molecule type" value="Genomic_DNA"/>
</dbReference>
<dbReference type="PIR" id="H95865">
    <property type="entry name" value="H95865"/>
</dbReference>
<dbReference type="RefSeq" id="NP_436732.1">
    <property type="nucleotide sequence ID" value="NC_003078.1"/>
</dbReference>
<dbReference type="SMR" id="P58336"/>
<dbReference type="EnsemblBacteria" id="CAC48592">
    <property type="protein sequence ID" value="CAC48592"/>
    <property type="gene ID" value="SM_b20199"/>
</dbReference>
<dbReference type="KEGG" id="sme:SM_b20199"/>
<dbReference type="PATRIC" id="fig|266834.11.peg.5108"/>
<dbReference type="eggNOG" id="COG0191">
    <property type="taxonomic scope" value="Bacteria"/>
</dbReference>
<dbReference type="HOGENOM" id="CLU_040088_0_0_5"/>
<dbReference type="OrthoDB" id="9803995at2"/>
<dbReference type="UniPathway" id="UPA00109">
    <property type="reaction ID" value="UER00183"/>
</dbReference>
<dbReference type="UniPathway" id="UPA00116"/>
<dbReference type="Proteomes" id="UP000001976">
    <property type="component" value="Plasmid pSymB"/>
</dbReference>
<dbReference type="GO" id="GO:0004332">
    <property type="term" value="F:fructose-bisphosphate aldolase activity"/>
    <property type="evidence" value="ECO:0007669"/>
    <property type="project" value="UniProtKB-EC"/>
</dbReference>
<dbReference type="GO" id="GO:0008270">
    <property type="term" value="F:zinc ion binding"/>
    <property type="evidence" value="ECO:0007669"/>
    <property type="project" value="InterPro"/>
</dbReference>
<dbReference type="GO" id="GO:0006096">
    <property type="term" value="P:glycolytic process"/>
    <property type="evidence" value="ECO:0007669"/>
    <property type="project" value="UniProtKB-UniPathway"/>
</dbReference>
<dbReference type="GO" id="GO:0019253">
    <property type="term" value="P:reductive pentose-phosphate cycle"/>
    <property type="evidence" value="ECO:0007669"/>
    <property type="project" value="UniProtKB-UniPathway"/>
</dbReference>
<dbReference type="CDD" id="cd00947">
    <property type="entry name" value="TBP_aldolase_IIB"/>
    <property type="match status" value="1"/>
</dbReference>
<dbReference type="FunFam" id="3.20.20.70:FF:000111">
    <property type="entry name" value="Fructose-1,6-bisphosphate aldolase"/>
    <property type="match status" value="1"/>
</dbReference>
<dbReference type="Gene3D" id="3.20.20.70">
    <property type="entry name" value="Aldolase class I"/>
    <property type="match status" value="1"/>
</dbReference>
<dbReference type="InterPro" id="IPR013785">
    <property type="entry name" value="Aldolase_TIM"/>
</dbReference>
<dbReference type="InterPro" id="IPR050246">
    <property type="entry name" value="Class_II_FBP_aldolase"/>
</dbReference>
<dbReference type="InterPro" id="IPR000771">
    <property type="entry name" value="FBA_II"/>
</dbReference>
<dbReference type="InterPro" id="IPR006412">
    <property type="entry name" value="Fruct_bisP_Calv"/>
</dbReference>
<dbReference type="NCBIfam" id="TIGR00167">
    <property type="entry name" value="cbbA"/>
    <property type="match status" value="1"/>
</dbReference>
<dbReference type="NCBIfam" id="TIGR01521">
    <property type="entry name" value="FruBisAldo_II_B"/>
    <property type="match status" value="1"/>
</dbReference>
<dbReference type="PANTHER" id="PTHR30304">
    <property type="entry name" value="D-TAGATOSE-1,6-BISPHOSPHATE ALDOLASE"/>
    <property type="match status" value="1"/>
</dbReference>
<dbReference type="PANTHER" id="PTHR30304:SF0">
    <property type="entry name" value="D-TAGATOSE-1,6-BISPHOSPHATE ALDOLASE SUBUNIT GATY-RELATED"/>
    <property type="match status" value="1"/>
</dbReference>
<dbReference type="Pfam" id="PF01116">
    <property type="entry name" value="F_bP_aldolase"/>
    <property type="match status" value="1"/>
</dbReference>
<dbReference type="PIRSF" id="PIRSF001359">
    <property type="entry name" value="F_bP_aldolase_II"/>
    <property type="match status" value="1"/>
</dbReference>
<dbReference type="SUPFAM" id="SSF51569">
    <property type="entry name" value="Aldolase"/>
    <property type="match status" value="1"/>
</dbReference>
<dbReference type="PROSITE" id="PS00602">
    <property type="entry name" value="ALDOLASE_CLASS_II_1"/>
    <property type="match status" value="1"/>
</dbReference>
<dbReference type="PROSITE" id="PS00806">
    <property type="entry name" value="ALDOLASE_CLASS_II_2"/>
    <property type="match status" value="1"/>
</dbReference>
<organism>
    <name type="scientific">Rhizobium meliloti (strain 1021)</name>
    <name type="common">Ensifer meliloti</name>
    <name type="synonym">Sinorhizobium meliloti</name>
    <dbReference type="NCBI Taxonomy" id="266834"/>
    <lineage>
        <taxon>Bacteria</taxon>
        <taxon>Pseudomonadati</taxon>
        <taxon>Pseudomonadota</taxon>
        <taxon>Alphaproteobacteria</taxon>
        <taxon>Hyphomicrobiales</taxon>
        <taxon>Rhizobiaceae</taxon>
        <taxon>Sinorhizobium/Ensifer group</taxon>
        <taxon>Sinorhizobium</taxon>
    </lineage>
</organism>
<sequence>MARITLRQLLDHAAERSYGVPAFNINNMEQGLAIMEAARASDAPVILQVSRGARSYANDVMLAKMMEALEEMYPDIPLCIHQDHGNNVATCLTAIQHGFTSVMMDGSLKEDAKTPADYDYNVSITAEVSRLAHMVGASVEGELGCLGSLETGHGEAEDGHGFEGALDRSQLLTDPDEAARFVAETGVDALAVAIGTSHGAYKFTRKPTGEVLAMDVIEKIHERLPDTHIVMHGSSSVPQEWQDVFNAHGGQMRETYGVPVEEIVRGIRFGVRKVNIDTDLRLAAAAAFRRVADTSRSEFDPRKFLKPAMDAMSAVCKARFEAFGTAGNASRIKVVPMPEMARRYASGSLKPQSARSEAA</sequence>
<geneLocation type="plasmid">
    <name>pSymB</name>
    <name>megaplasmid 2</name>
</geneLocation>
<keyword id="KW-0113">Calvin cycle</keyword>
<keyword id="KW-0324">Glycolysis</keyword>
<keyword id="KW-0456">Lyase</keyword>
<keyword id="KW-0479">Metal-binding</keyword>
<keyword id="KW-0614">Plasmid</keyword>
<keyword id="KW-1185">Reference proteome</keyword>
<keyword id="KW-0862">Zinc</keyword>
<feature type="chain" id="PRO_0000178729" description="Fructose-bisphosphate aldolase">
    <location>
        <begin position="1"/>
        <end position="359"/>
    </location>
</feature>
<feature type="active site" description="Proton donor" evidence="1">
    <location>
        <position position="83"/>
    </location>
</feature>
<feature type="binding site" evidence="1">
    <location>
        <position position="50"/>
    </location>
    <ligand>
        <name>D-glyceraldehyde 3-phosphate</name>
        <dbReference type="ChEBI" id="CHEBI:59776"/>
    </ligand>
</feature>
<feature type="binding site" evidence="1">
    <location>
        <position position="84"/>
    </location>
    <ligand>
        <name>Zn(2+)</name>
        <dbReference type="ChEBI" id="CHEBI:29105"/>
        <label>1</label>
        <note>catalytic</note>
    </ligand>
</feature>
<feature type="binding site" evidence="1">
    <location>
        <position position="105"/>
    </location>
    <ligand>
        <name>Zn(2+)</name>
        <dbReference type="ChEBI" id="CHEBI:29105"/>
        <label>2</label>
    </ligand>
</feature>
<feature type="binding site" evidence="1">
    <location>
        <position position="142"/>
    </location>
    <ligand>
        <name>Zn(2+)</name>
        <dbReference type="ChEBI" id="CHEBI:29105"/>
        <label>2</label>
    </ligand>
</feature>
<feature type="binding site" evidence="1">
    <location>
        <position position="198"/>
    </location>
    <ligand>
        <name>Zn(2+)</name>
        <dbReference type="ChEBI" id="CHEBI:29105"/>
        <label>1</label>
        <note>catalytic</note>
    </ligand>
</feature>
<feature type="binding site" evidence="1">
    <location>
        <position position="199"/>
    </location>
    <ligand>
        <name>dihydroxyacetone phosphate</name>
        <dbReference type="ChEBI" id="CHEBI:57642"/>
    </ligand>
</feature>
<feature type="binding site" evidence="1">
    <location>
        <position position="232"/>
    </location>
    <ligand>
        <name>Zn(2+)</name>
        <dbReference type="ChEBI" id="CHEBI:29105"/>
        <label>1</label>
        <note>catalytic</note>
    </ligand>
</feature>
<feature type="binding site" evidence="1">
    <location>
        <begin position="233"/>
        <end position="235"/>
    </location>
    <ligand>
        <name>dihydroxyacetone phosphate</name>
        <dbReference type="ChEBI" id="CHEBI:57642"/>
    </ligand>
</feature>
<feature type="binding site" evidence="1">
    <location>
        <begin position="275"/>
        <end position="278"/>
    </location>
    <ligand>
        <name>dihydroxyacetone phosphate</name>
        <dbReference type="ChEBI" id="CHEBI:57642"/>
    </ligand>
</feature>
<evidence type="ECO:0000250" key="1"/>
<evidence type="ECO:0000305" key="2"/>